<keyword id="KW-0030">Aminoacyl-tRNA synthetase</keyword>
<keyword id="KW-0067">ATP-binding</keyword>
<keyword id="KW-0963">Cytoplasm</keyword>
<keyword id="KW-0436">Ligase</keyword>
<keyword id="KW-0547">Nucleotide-binding</keyword>
<keyword id="KW-0648">Protein biosynthesis</keyword>
<keyword id="KW-1185">Reference proteome</keyword>
<name>SYDND_PELTS</name>
<accession>A5D3E3</accession>
<organism>
    <name type="scientific">Pelotomaculum thermopropionicum (strain DSM 13744 / JCM 10971 / SI)</name>
    <dbReference type="NCBI Taxonomy" id="370438"/>
    <lineage>
        <taxon>Bacteria</taxon>
        <taxon>Bacillati</taxon>
        <taxon>Bacillota</taxon>
        <taxon>Clostridia</taxon>
        <taxon>Eubacteriales</taxon>
        <taxon>Desulfotomaculaceae</taxon>
        <taxon>Pelotomaculum</taxon>
    </lineage>
</organism>
<feature type="chain" id="PRO_1000074712" description="Aspartate--tRNA(Asp/Asn) ligase">
    <location>
        <begin position="1"/>
        <end position="603"/>
    </location>
</feature>
<feature type="region of interest" description="Aspartate" evidence="1">
    <location>
        <begin position="206"/>
        <end position="209"/>
    </location>
</feature>
<feature type="binding site" evidence="1">
    <location>
        <position position="182"/>
    </location>
    <ligand>
        <name>L-aspartate</name>
        <dbReference type="ChEBI" id="CHEBI:29991"/>
    </ligand>
</feature>
<feature type="binding site" evidence="1">
    <location>
        <begin position="228"/>
        <end position="230"/>
    </location>
    <ligand>
        <name>ATP</name>
        <dbReference type="ChEBI" id="CHEBI:30616"/>
    </ligand>
</feature>
<feature type="binding site" evidence="1">
    <location>
        <position position="228"/>
    </location>
    <ligand>
        <name>L-aspartate</name>
        <dbReference type="ChEBI" id="CHEBI:29991"/>
    </ligand>
</feature>
<feature type="binding site" evidence="1">
    <location>
        <position position="237"/>
    </location>
    <ligand>
        <name>ATP</name>
        <dbReference type="ChEBI" id="CHEBI:30616"/>
    </ligand>
</feature>
<feature type="binding site" evidence="1">
    <location>
        <position position="455"/>
    </location>
    <ligand>
        <name>L-aspartate</name>
        <dbReference type="ChEBI" id="CHEBI:29991"/>
    </ligand>
</feature>
<feature type="binding site" evidence="1">
    <location>
        <position position="489"/>
    </location>
    <ligand>
        <name>ATP</name>
        <dbReference type="ChEBI" id="CHEBI:30616"/>
    </ligand>
</feature>
<feature type="binding site" evidence="1">
    <location>
        <position position="496"/>
    </location>
    <ligand>
        <name>L-aspartate</name>
        <dbReference type="ChEBI" id="CHEBI:29991"/>
    </ligand>
</feature>
<feature type="binding site" evidence="1">
    <location>
        <begin position="541"/>
        <end position="544"/>
    </location>
    <ligand>
        <name>ATP</name>
        <dbReference type="ChEBI" id="CHEBI:30616"/>
    </ligand>
</feature>
<feature type="site" description="Important for tRNA non-discrimination" evidence="1">
    <location>
        <position position="38"/>
    </location>
</feature>
<feature type="site" description="Important for tRNA non-discrimination" evidence="1">
    <location>
        <position position="90"/>
    </location>
</feature>
<sequence>MIEFMDGLKRSHYCGELRVEHAGLEVVLTGWVQRRRDHGGLIFIDLRDRTGIVQVVFSPDLHEEAFLKAEAVRNEYVLAVRGTVRERPEGTANPNLATGQVEVLGCELRILNRAKTPPFYIEDGVDVDENLRLRYRYLDLRRPEMQEALIFRHRAAKSVRDFLDEHGFLEIETPMLTRSTPEGARDYLVPSRVNPGRFYALPQSPQLFKQILMVAGMDRYFQIARCFRDEDLRADRQPEFTQIDIEMSFVDVDDVLELTEGMVARLCREVAGLDIPRPFPRLSYREAMDRFGSDKPDTRFGMELKDISDIASGCGFKVFASAVAGGGQVKGINAAGCGSFSRKEIDDLTAFAAVYKAKGLAYFIVNEEGVKSAISKFFTEAELSAILERMDAKPGDLLLFVADKPEVVAASLGALRLHLGERLGLIPEGTYHFLWVVDFPLLEYNQEEGRYEAMHHPFTSPRETDIPLLESDPGRVRAKAYDLVLNGTEVGGGSIRIHRRDVQEKVFTAIGIDREEASEKFGFLLEAFEYGTPPHGGIALGFDRLVMLLAGKNTIRDVIAFPKTQSATDLMTMAPGPVAEEQLRELHIRTVLKIRERERLTAR</sequence>
<protein>
    <recommendedName>
        <fullName evidence="1">Aspartate--tRNA(Asp/Asn) ligase</fullName>
        <ecNumber evidence="1">6.1.1.23</ecNumber>
    </recommendedName>
    <alternativeName>
        <fullName evidence="1">Aspartyl-tRNA synthetase</fullName>
        <shortName evidence="1">AspRS</shortName>
    </alternativeName>
    <alternativeName>
        <fullName evidence="1">Non-discriminating aspartyl-tRNA synthetase</fullName>
        <shortName evidence="1">ND-AspRS</shortName>
    </alternativeName>
</protein>
<dbReference type="EC" id="6.1.1.23" evidence="1"/>
<dbReference type="EMBL" id="AP009389">
    <property type="protein sequence ID" value="BAF59230.1"/>
    <property type="molecule type" value="Genomic_DNA"/>
</dbReference>
<dbReference type="SMR" id="A5D3E3"/>
<dbReference type="STRING" id="370438.PTH_1049"/>
<dbReference type="KEGG" id="pth:PTH_1049"/>
<dbReference type="eggNOG" id="COG0173">
    <property type="taxonomic scope" value="Bacteria"/>
</dbReference>
<dbReference type="HOGENOM" id="CLU_014330_3_2_9"/>
<dbReference type="Proteomes" id="UP000006556">
    <property type="component" value="Chromosome"/>
</dbReference>
<dbReference type="GO" id="GO:0005737">
    <property type="term" value="C:cytoplasm"/>
    <property type="evidence" value="ECO:0007669"/>
    <property type="project" value="UniProtKB-SubCell"/>
</dbReference>
<dbReference type="GO" id="GO:0004815">
    <property type="term" value="F:aspartate-tRNA ligase activity"/>
    <property type="evidence" value="ECO:0007669"/>
    <property type="project" value="UniProtKB-UniRule"/>
</dbReference>
<dbReference type="GO" id="GO:0050560">
    <property type="term" value="F:aspartate-tRNA(Asn) ligase activity"/>
    <property type="evidence" value="ECO:0007669"/>
    <property type="project" value="UniProtKB-EC"/>
</dbReference>
<dbReference type="GO" id="GO:0005524">
    <property type="term" value="F:ATP binding"/>
    <property type="evidence" value="ECO:0007669"/>
    <property type="project" value="UniProtKB-UniRule"/>
</dbReference>
<dbReference type="GO" id="GO:0140096">
    <property type="term" value="F:catalytic activity, acting on a protein"/>
    <property type="evidence" value="ECO:0007669"/>
    <property type="project" value="UniProtKB-ARBA"/>
</dbReference>
<dbReference type="GO" id="GO:0003676">
    <property type="term" value="F:nucleic acid binding"/>
    <property type="evidence" value="ECO:0007669"/>
    <property type="project" value="InterPro"/>
</dbReference>
<dbReference type="GO" id="GO:0016740">
    <property type="term" value="F:transferase activity"/>
    <property type="evidence" value="ECO:0007669"/>
    <property type="project" value="UniProtKB-ARBA"/>
</dbReference>
<dbReference type="GO" id="GO:0006422">
    <property type="term" value="P:aspartyl-tRNA aminoacylation"/>
    <property type="evidence" value="ECO:0007669"/>
    <property type="project" value="UniProtKB-UniRule"/>
</dbReference>
<dbReference type="CDD" id="cd00777">
    <property type="entry name" value="AspRS_core"/>
    <property type="match status" value="1"/>
</dbReference>
<dbReference type="CDD" id="cd04317">
    <property type="entry name" value="EcAspRS_like_N"/>
    <property type="match status" value="1"/>
</dbReference>
<dbReference type="Gene3D" id="3.30.930.10">
    <property type="entry name" value="Bira Bifunctional Protein, Domain 2"/>
    <property type="match status" value="1"/>
</dbReference>
<dbReference type="Gene3D" id="3.30.1360.30">
    <property type="entry name" value="GAD-like domain"/>
    <property type="match status" value="1"/>
</dbReference>
<dbReference type="Gene3D" id="2.40.50.140">
    <property type="entry name" value="Nucleic acid-binding proteins"/>
    <property type="match status" value="1"/>
</dbReference>
<dbReference type="HAMAP" id="MF_00044">
    <property type="entry name" value="Asp_tRNA_synth_type1"/>
    <property type="match status" value="1"/>
</dbReference>
<dbReference type="InterPro" id="IPR004364">
    <property type="entry name" value="Aa-tRNA-synt_II"/>
</dbReference>
<dbReference type="InterPro" id="IPR006195">
    <property type="entry name" value="aa-tRNA-synth_II"/>
</dbReference>
<dbReference type="InterPro" id="IPR045864">
    <property type="entry name" value="aa-tRNA-synth_II/BPL/LPL"/>
</dbReference>
<dbReference type="InterPro" id="IPR004524">
    <property type="entry name" value="Asp-tRNA-ligase_1"/>
</dbReference>
<dbReference type="InterPro" id="IPR047089">
    <property type="entry name" value="Asp-tRNA-ligase_1_N"/>
</dbReference>
<dbReference type="InterPro" id="IPR002312">
    <property type="entry name" value="Asp/Asn-tRNA-synth_IIb"/>
</dbReference>
<dbReference type="InterPro" id="IPR047090">
    <property type="entry name" value="AspRS_core"/>
</dbReference>
<dbReference type="InterPro" id="IPR004115">
    <property type="entry name" value="GAD-like_sf"/>
</dbReference>
<dbReference type="InterPro" id="IPR029351">
    <property type="entry name" value="GAD_dom"/>
</dbReference>
<dbReference type="InterPro" id="IPR012340">
    <property type="entry name" value="NA-bd_OB-fold"/>
</dbReference>
<dbReference type="InterPro" id="IPR004365">
    <property type="entry name" value="NA-bd_OB_tRNA"/>
</dbReference>
<dbReference type="NCBIfam" id="TIGR00459">
    <property type="entry name" value="aspS_bact"/>
    <property type="match status" value="1"/>
</dbReference>
<dbReference type="NCBIfam" id="NF001750">
    <property type="entry name" value="PRK00476.1"/>
    <property type="match status" value="1"/>
</dbReference>
<dbReference type="PANTHER" id="PTHR22594:SF5">
    <property type="entry name" value="ASPARTATE--TRNA LIGASE, MITOCHONDRIAL"/>
    <property type="match status" value="1"/>
</dbReference>
<dbReference type="PANTHER" id="PTHR22594">
    <property type="entry name" value="ASPARTYL/LYSYL-TRNA SYNTHETASE"/>
    <property type="match status" value="1"/>
</dbReference>
<dbReference type="Pfam" id="PF02938">
    <property type="entry name" value="GAD"/>
    <property type="match status" value="1"/>
</dbReference>
<dbReference type="Pfam" id="PF00152">
    <property type="entry name" value="tRNA-synt_2"/>
    <property type="match status" value="1"/>
</dbReference>
<dbReference type="Pfam" id="PF01336">
    <property type="entry name" value="tRNA_anti-codon"/>
    <property type="match status" value="1"/>
</dbReference>
<dbReference type="PRINTS" id="PR01042">
    <property type="entry name" value="TRNASYNTHASP"/>
</dbReference>
<dbReference type="SUPFAM" id="SSF55681">
    <property type="entry name" value="Class II aaRS and biotin synthetases"/>
    <property type="match status" value="1"/>
</dbReference>
<dbReference type="SUPFAM" id="SSF55261">
    <property type="entry name" value="GAD domain-like"/>
    <property type="match status" value="1"/>
</dbReference>
<dbReference type="SUPFAM" id="SSF50249">
    <property type="entry name" value="Nucleic acid-binding proteins"/>
    <property type="match status" value="1"/>
</dbReference>
<dbReference type="PROSITE" id="PS50862">
    <property type="entry name" value="AA_TRNA_LIGASE_II"/>
    <property type="match status" value="1"/>
</dbReference>
<comment type="function">
    <text evidence="1">Aspartyl-tRNA synthetase with relaxed tRNA specificity since it is able to aspartylate not only its cognate tRNA(Asp) but also tRNA(Asn). Reaction proceeds in two steps: L-aspartate is first activated by ATP to form Asp-AMP and then transferred to the acceptor end of tRNA(Asp/Asn).</text>
</comment>
<comment type="catalytic activity">
    <reaction evidence="1">
        <text>tRNA(Asx) + L-aspartate + ATP = L-aspartyl-tRNA(Asx) + AMP + diphosphate</text>
        <dbReference type="Rhea" id="RHEA:18349"/>
        <dbReference type="Rhea" id="RHEA-COMP:9710"/>
        <dbReference type="Rhea" id="RHEA-COMP:9711"/>
        <dbReference type="ChEBI" id="CHEBI:29991"/>
        <dbReference type="ChEBI" id="CHEBI:30616"/>
        <dbReference type="ChEBI" id="CHEBI:33019"/>
        <dbReference type="ChEBI" id="CHEBI:78442"/>
        <dbReference type="ChEBI" id="CHEBI:78516"/>
        <dbReference type="ChEBI" id="CHEBI:456215"/>
        <dbReference type="EC" id="6.1.1.23"/>
    </reaction>
</comment>
<comment type="subunit">
    <text evidence="1">Homodimer.</text>
</comment>
<comment type="subcellular location">
    <subcellularLocation>
        <location evidence="1">Cytoplasm</location>
    </subcellularLocation>
</comment>
<comment type="similarity">
    <text evidence="1">Belongs to the class-II aminoacyl-tRNA synthetase family. Type 1 subfamily.</text>
</comment>
<gene>
    <name evidence="1" type="primary">aspS</name>
    <name type="ordered locus">PTH_1049</name>
</gene>
<proteinExistence type="inferred from homology"/>
<evidence type="ECO:0000255" key="1">
    <source>
        <dbReference type="HAMAP-Rule" id="MF_00044"/>
    </source>
</evidence>
<reference key="1">
    <citation type="journal article" date="2008" name="Genome Res.">
        <title>The genome of Pelotomaculum thermopropionicum reveals niche-associated evolution in anaerobic microbiota.</title>
        <authorList>
            <person name="Kosaka T."/>
            <person name="Kato S."/>
            <person name="Shimoyama T."/>
            <person name="Ishii S."/>
            <person name="Abe T."/>
            <person name="Watanabe K."/>
        </authorList>
    </citation>
    <scope>NUCLEOTIDE SEQUENCE [LARGE SCALE GENOMIC DNA]</scope>
    <source>
        <strain>DSM 13744 / JCM 10971 / SI</strain>
    </source>
</reference>